<keyword id="KW-0004">4Fe-4S</keyword>
<keyword id="KW-0249">Electron transport</keyword>
<keyword id="KW-0408">Iron</keyword>
<keyword id="KW-0411">Iron-sulfur</keyword>
<keyword id="KW-0479">Metal-binding</keyword>
<keyword id="KW-1185">Reference proteome</keyword>
<keyword id="KW-0813">Transport</keyword>
<evidence type="ECO:0000250" key="1"/>
<evidence type="ECO:0000305" key="2"/>
<name>FIXX_ECO57</name>
<feature type="chain" id="PRO_0000159214" description="Ferredoxin-like protein FixX">
    <location>
        <begin position="1"/>
        <end position="95"/>
    </location>
</feature>
<reference key="1">
    <citation type="journal article" date="2001" name="Nature">
        <title>Genome sequence of enterohaemorrhagic Escherichia coli O157:H7.</title>
        <authorList>
            <person name="Perna N.T."/>
            <person name="Plunkett G. III"/>
            <person name="Burland V."/>
            <person name="Mau B."/>
            <person name="Glasner J.D."/>
            <person name="Rose D.J."/>
            <person name="Mayhew G.F."/>
            <person name="Evans P.S."/>
            <person name="Gregor J."/>
            <person name="Kirkpatrick H.A."/>
            <person name="Posfai G."/>
            <person name="Hackett J."/>
            <person name="Klink S."/>
            <person name="Boutin A."/>
            <person name="Shao Y."/>
            <person name="Miller L."/>
            <person name="Grotbeck E.J."/>
            <person name="Davis N.W."/>
            <person name="Lim A."/>
            <person name="Dimalanta E.T."/>
            <person name="Potamousis K."/>
            <person name="Apodaca J."/>
            <person name="Anantharaman T.S."/>
            <person name="Lin J."/>
            <person name="Yen G."/>
            <person name="Schwartz D.C."/>
            <person name="Welch R.A."/>
            <person name="Blattner F.R."/>
        </authorList>
    </citation>
    <scope>NUCLEOTIDE SEQUENCE [LARGE SCALE GENOMIC DNA]</scope>
    <source>
        <strain>O157:H7 / EDL933 / ATCC 700927 / EHEC</strain>
    </source>
</reference>
<reference key="2">
    <citation type="journal article" date="2001" name="DNA Res.">
        <title>Complete genome sequence of enterohemorrhagic Escherichia coli O157:H7 and genomic comparison with a laboratory strain K-12.</title>
        <authorList>
            <person name="Hayashi T."/>
            <person name="Makino K."/>
            <person name="Ohnishi M."/>
            <person name="Kurokawa K."/>
            <person name="Ishii K."/>
            <person name="Yokoyama K."/>
            <person name="Han C.-G."/>
            <person name="Ohtsubo E."/>
            <person name="Nakayama K."/>
            <person name="Murata T."/>
            <person name="Tanaka M."/>
            <person name="Tobe T."/>
            <person name="Iida T."/>
            <person name="Takami H."/>
            <person name="Honda T."/>
            <person name="Sasakawa C."/>
            <person name="Ogasawara N."/>
            <person name="Yasunaga T."/>
            <person name="Kuhara S."/>
            <person name="Shiba T."/>
            <person name="Hattori M."/>
            <person name="Shinagawa H."/>
        </authorList>
    </citation>
    <scope>NUCLEOTIDE SEQUENCE [LARGE SCALE GENOMIC DNA]</scope>
    <source>
        <strain>O157:H7 / Sakai / RIMD 0509952 / EHEC</strain>
    </source>
</reference>
<gene>
    <name type="primary">fixX</name>
    <name type="ordered locus">Z0050</name>
    <name type="ordered locus">ECs0047</name>
</gene>
<dbReference type="EMBL" id="AE005174">
    <property type="protein sequence ID" value="AAG54347.1"/>
    <property type="molecule type" value="Genomic_DNA"/>
</dbReference>
<dbReference type="EMBL" id="BA000007">
    <property type="protein sequence ID" value="BAB33470.1"/>
    <property type="molecule type" value="Genomic_DNA"/>
</dbReference>
<dbReference type="PIR" id="G85485">
    <property type="entry name" value="G85485"/>
</dbReference>
<dbReference type="PIR" id="G90634">
    <property type="entry name" value="G90634"/>
</dbReference>
<dbReference type="RefSeq" id="NP_308074.1">
    <property type="nucleotide sequence ID" value="NC_002695.1"/>
</dbReference>
<dbReference type="RefSeq" id="WP_000203741.1">
    <property type="nucleotide sequence ID" value="NZ_VOAI01000002.1"/>
</dbReference>
<dbReference type="SMR" id="P68648"/>
<dbReference type="STRING" id="155864.Z0050"/>
<dbReference type="GeneID" id="913446"/>
<dbReference type="GeneID" id="93777391"/>
<dbReference type="KEGG" id="ece:Z0050"/>
<dbReference type="KEGG" id="ecs:ECs_0047"/>
<dbReference type="PATRIC" id="fig|386585.9.peg.146"/>
<dbReference type="eggNOG" id="COG2440">
    <property type="taxonomic scope" value="Bacteria"/>
</dbReference>
<dbReference type="HOGENOM" id="CLU_163428_1_0_6"/>
<dbReference type="OMA" id="YGILFKF"/>
<dbReference type="Proteomes" id="UP000000558">
    <property type="component" value="Chromosome"/>
</dbReference>
<dbReference type="Proteomes" id="UP000002519">
    <property type="component" value="Chromosome"/>
</dbReference>
<dbReference type="GO" id="GO:0051539">
    <property type="term" value="F:4 iron, 4 sulfur cluster binding"/>
    <property type="evidence" value="ECO:0007669"/>
    <property type="project" value="UniProtKB-KW"/>
</dbReference>
<dbReference type="GO" id="GO:0005506">
    <property type="term" value="F:iron ion binding"/>
    <property type="evidence" value="ECO:0007669"/>
    <property type="project" value="InterPro"/>
</dbReference>
<dbReference type="Gene3D" id="3.30.70.20">
    <property type="match status" value="1"/>
</dbReference>
<dbReference type="InterPro" id="IPR012206">
    <property type="entry name" value="Fd_FixX"/>
</dbReference>
<dbReference type="NCBIfam" id="NF011993">
    <property type="entry name" value="PRK15449.1"/>
    <property type="match status" value="1"/>
</dbReference>
<dbReference type="PANTHER" id="PTHR43082">
    <property type="entry name" value="FERREDOXIN-LIKE"/>
    <property type="match status" value="1"/>
</dbReference>
<dbReference type="PANTHER" id="PTHR43082:SF1">
    <property type="entry name" value="FERREDOXIN-LIKE PROTEIN FIXX-RELATED"/>
    <property type="match status" value="1"/>
</dbReference>
<dbReference type="PIRSF" id="PIRSF036548">
    <property type="entry name" value="Fdx_FixX"/>
    <property type="match status" value="1"/>
</dbReference>
<dbReference type="SUPFAM" id="SSF54862">
    <property type="entry name" value="4Fe-4S ferredoxins"/>
    <property type="match status" value="1"/>
</dbReference>
<comment type="function">
    <text evidence="1">Could be part of an electron transfer system required for anaerobic carnitine reduction. Could be a 3Fe-4S cluster-containing protein (By similarity).</text>
</comment>
<comment type="similarity">
    <text evidence="2">Belongs to the bacterial-type ferredoxin family. FixX subfamily.</text>
</comment>
<sequence length="95" mass="10479">MTSPVNVDVKLGVNKFNVDEEHPHIVVKADADKQALELLVKACPAGLYKKQDDGSVRFDYAGCLECGTCRILGLGSALEQWEYPRGTFGVEFRYG</sequence>
<protein>
    <recommendedName>
        <fullName>Ferredoxin-like protein FixX</fullName>
    </recommendedName>
</protein>
<organism>
    <name type="scientific">Escherichia coli O157:H7</name>
    <dbReference type="NCBI Taxonomy" id="83334"/>
    <lineage>
        <taxon>Bacteria</taxon>
        <taxon>Pseudomonadati</taxon>
        <taxon>Pseudomonadota</taxon>
        <taxon>Gammaproteobacteria</taxon>
        <taxon>Enterobacterales</taxon>
        <taxon>Enterobacteriaceae</taxon>
        <taxon>Escherichia</taxon>
    </lineage>
</organism>
<proteinExistence type="inferred from homology"/>
<accession>P68648</accession>
<accession>P31576</accession>
<accession>P75627</accession>